<proteinExistence type="inferred from homology"/>
<feature type="chain" id="PRO_1000093345" description="Endonuclease MutS2">
    <location>
        <begin position="1"/>
        <end position="786"/>
    </location>
</feature>
<feature type="domain" description="Smr" evidence="1">
    <location>
        <begin position="710"/>
        <end position="785"/>
    </location>
</feature>
<feature type="binding site" evidence="1">
    <location>
        <begin position="332"/>
        <end position="339"/>
    </location>
    <ligand>
        <name>ATP</name>
        <dbReference type="ChEBI" id="CHEBI:30616"/>
    </ligand>
</feature>
<keyword id="KW-0067">ATP-binding</keyword>
<keyword id="KW-0238">DNA-binding</keyword>
<keyword id="KW-0255">Endonuclease</keyword>
<keyword id="KW-0378">Hydrolase</keyword>
<keyword id="KW-0540">Nuclease</keyword>
<keyword id="KW-0547">Nucleotide-binding</keyword>
<keyword id="KW-0694">RNA-binding</keyword>
<keyword id="KW-0699">rRNA-binding</keyword>
<name>MUTS2_CLOB8</name>
<gene>
    <name evidence="1" type="primary">mutS2</name>
    <name evidence="1" type="synonym">rqcU</name>
    <name type="ordered locus">Cbei_0946</name>
</gene>
<evidence type="ECO:0000255" key="1">
    <source>
        <dbReference type="HAMAP-Rule" id="MF_00092"/>
    </source>
</evidence>
<protein>
    <recommendedName>
        <fullName evidence="1">Endonuclease MutS2</fullName>
        <ecNumber evidence="1">3.1.-.-</ecNumber>
    </recommendedName>
    <alternativeName>
        <fullName evidence="1">Ribosome-associated protein quality control-upstream factor</fullName>
        <shortName evidence="1">RQC-upstream factor</shortName>
        <shortName evidence="1">RqcU</shortName>
        <ecNumber evidence="1">3.6.4.-</ecNumber>
    </alternativeName>
</protein>
<dbReference type="EC" id="3.1.-.-" evidence="1"/>
<dbReference type="EC" id="3.6.4.-" evidence="1"/>
<dbReference type="EMBL" id="CP000721">
    <property type="protein sequence ID" value="ABR33130.1"/>
    <property type="molecule type" value="Genomic_DNA"/>
</dbReference>
<dbReference type="RefSeq" id="WP_011968289.1">
    <property type="nucleotide sequence ID" value="NC_009617.1"/>
</dbReference>
<dbReference type="SMR" id="A6LS00"/>
<dbReference type="KEGG" id="cbe:Cbei_0946"/>
<dbReference type="eggNOG" id="COG1193">
    <property type="taxonomic scope" value="Bacteria"/>
</dbReference>
<dbReference type="HOGENOM" id="CLU_011252_2_1_9"/>
<dbReference type="Proteomes" id="UP000000565">
    <property type="component" value="Chromosome"/>
</dbReference>
<dbReference type="GO" id="GO:0005524">
    <property type="term" value="F:ATP binding"/>
    <property type="evidence" value="ECO:0007669"/>
    <property type="project" value="UniProtKB-UniRule"/>
</dbReference>
<dbReference type="GO" id="GO:0016887">
    <property type="term" value="F:ATP hydrolysis activity"/>
    <property type="evidence" value="ECO:0007669"/>
    <property type="project" value="InterPro"/>
</dbReference>
<dbReference type="GO" id="GO:0140664">
    <property type="term" value="F:ATP-dependent DNA damage sensor activity"/>
    <property type="evidence" value="ECO:0007669"/>
    <property type="project" value="InterPro"/>
</dbReference>
<dbReference type="GO" id="GO:0004519">
    <property type="term" value="F:endonuclease activity"/>
    <property type="evidence" value="ECO:0007669"/>
    <property type="project" value="UniProtKB-UniRule"/>
</dbReference>
<dbReference type="GO" id="GO:0030983">
    <property type="term" value="F:mismatched DNA binding"/>
    <property type="evidence" value="ECO:0007669"/>
    <property type="project" value="InterPro"/>
</dbReference>
<dbReference type="GO" id="GO:0043023">
    <property type="term" value="F:ribosomal large subunit binding"/>
    <property type="evidence" value="ECO:0007669"/>
    <property type="project" value="UniProtKB-UniRule"/>
</dbReference>
<dbReference type="GO" id="GO:0019843">
    <property type="term" value="F:rRNA binding"/>
    <property type="evidence" value="ECO:0007669"/>
    <property type="project" value="UniProtKB-UniRule"/>
</dbReference>
<dbReference type="GO" id="GO:0006298">
    <property type="term" value="P:mismatch repair"/>
    <property type="evidence" value="ECO:0007669"/>
    <property type="project" value="InterPro"/>
</dbReference>
<dbReference type="GO" id="GO:0045910">
    <property type="term" value="P:negative regulation of DNA recombination"/>
    <property type="evidence" value="ECO:0007669"/>
    <property type="project" value="InterPro"/>
</dbReference>
<dbReference type="GO" id="GO:0072344">
    <property type="term" value="P:rescue of stalled ribosome"/>
    <property type="evidence" value="ECO:0007669"/>
    <property type="project" value="UniProtKB-UniRule"/>
</dbReference>
<dbReference type="CDD" id="cd03280">
    <property type="entry name" value="ABC_MutS2"/>
    <property type="match status" value="1"/>
</dbReference>
<dbReference type="FunFam" id="3.30.1370.110:FF:000007">
    <property type="entry name" value="Endonuclease MutS2"/>
    <property type="match status" value="1"/>
</dbReference>
<dbReference type="FunFam" id="3.40.50.300:FF:000830">
    <property type="entry name" value="Endonuclease MutS2"/>
    <property type="match status" value="1"/>
</dbReference>
<dbReference type="Gene3D" id="3.30.1370.110">
    <property type="match status" value="1"/>
</dbReference>
<dbReference type="Gene3D" id="3.40.50.300">
    <property type="entry name" value="P-loop containing nucleotide triphosphate hydrolases"/>
    <property type="match status" value="1"/>
</dbReference>
<dbReference type="HAMAP" id="MF_00092">
    <property type="entry name" value="MutS2"/>
    <property type="match status" value="1"/>
</dbReference>
<dbReference type="InterPro" id="IPR000432">
    <property type="entry name" value="DNA_mismatch_repair_MutS_C"/>
</dbReference>
<dbReference type="InterPro" id="IPR007696">
    <property type="entry name" value="DNA_mismatch_repair_MutS_core"/>
</dbReference>
<dbReference type="InterPro" id="IPR036187">
    <property type="entry name" value="DNA_mismatch_repair_MutS_sf"/>
</dbReference>
<dbReference type="InterPro" id="IPR046893">
    <property type="entry name" value="MSSS"/>
</dbReference>
<dbReference type="InterPro" id="IPR045076">
    <property type="entry name" value="MutS"/>
</dbReference>
<dbReference type="InterPro" id="IPR005747">
    <property type="entry name" value="MutS2"/>
</dbReference>
<dbReference type="InterPro" id="IPR027417">
    <property type="entry name" value="P-loop_NTPase"/>
</dbReference>
<dbReference type="InterPro" id="IPR002625">
    <property type="entry name" value="Smr_dom"/>
</dbReference>
<dbReference type="InterPro" id="IPR036063">
    <property type="entry name" value="Smr_dom_sf"/>
</dbReference>
<dbReference type="NCBIfam" id="TIGR01069">
    <property type="entry name" value="mutS2"/>
    <property type="match status" value="1"/>
</dbReference>
<dbReference type="PANTHER" id="PTHR48466:SF2">
    <property type="entry name" value="OS10G0509000 PROTEIN"/>
    <property type="match status" value="1"/>
</dbReference>
<dbReference type="PANTHER" id="PTHR48466">
    <property type="entry name" value="OS10G0509000 PROTEIN-RELATED"/>
    <property type="match status" value="1"/>
</dbReference>
<dbReference type="Pfam" id="PF20297">
    <property type="entry name" value="MSSS"/>
    <property type="match status" value="1"/>
</dbReference>
<dbReference type="Pfam" id="PF00488">
    <property type="entry name" value="MutS_V"/>
    <property type="match status" value="1"/>
</dbReference>
<dbReference type="Pfam" id="PF01713">
    <property type="entry name" value="Smr"/>
    <property type="match status" value="1"/>
</dbReference>
<dbReference type="PIRSF" id="PIRSF005814">
    <property type="entry name" value="MutS_YshD"/>
    <property type="match status" value="1"/>
</dbReference>
<dbReference type="SMART" id="SM00534">
    <property type="entry name" value="MUTSac"/>
    <property type="match status" value="1"/>
</dbReference>
<dbReference type="SMART" id="SM00533">
    <property type="entry name" value="MUTSd"/>
    <property type="match status" value="1"/>
</dbReference>
<dbReference type="SMART" id="SM00463">
    <property type="entry name" value="SMR"/>
    <property type="match status" value="1"/>
</dbReference>
<dbReference type="SUPFAM" id="SSF48334">
    <property type="entry name" value="DNA repair protein MutS, domain III"/>
    <property type="match status" value="1"/>
</dbReference>
<dbReference type="SUPFAM" id="SSF52540">
    <property type="entry name" value="P-loop containing nucleoside triphosphate hydrolases"/>
    <property type="match status" value="1"/>
</dbReference>
<dbReference type="SUPFAM" id="SSF160443">
    <property type="entry name" value="SMR domain-like"/>
    <property type="match status" value="1"/>
</dbReference>
<dbReference type="PROSITE" id="PS00486">
    <property type="entry name" value="DNA_MISMATCH_REPAIR_2"/>
    <property type="match status" value="1"/>
</dbReference>
<dbReference type="PROSITE" id="PS50828">
    <property type="entry name" value="SMR"/>
    <property type="match status" value="1"/>
</dbReference>
<organism>
    <name type="scientific">Clostridium beijerinckii (strain ATCC 51743 / NCIMB 8052)</name>
    <name type="common">Clostridium acetobutylicum</name>
    <dbReference type="NCBI Taxonomy" id="290402"/>
    <lineage>
        <taxon>Bacteria</taxon>
        <taxon>Bacillati</taxon>
        <taxon>Bacillota</taxon>
        <taxon>Clostridia</taxon>
        <taxon>Eubacteriales</taxon>
        <taxon>Clostridiaceae</taxon>
        <taxon>Clostridium</taxon>
    </lineage>
</organism>
<accession>A6LS00</accession>
<sequence length="786" mass="88384">MNERSLRILEFNKIKEKIKKYARTNAAKAKVEDLEPYDNLYEINNKLEETNEALEILISKGNPPLEGLADIHEGIERAKKGGTLSPGQLLKVGGMLKATRNMKEFFKREEVEKSYPKLEDLAYILAPVKALEDEIERAIVSEDEISDKASQTLCNIRRSLKEKNSSVREKISSIVRSNSKYLQDDLYTMRGDRYVLPVKSEYKSQVPGLVHDQSSTGATFFIEPMSLVNLNNEIRELFLKEKAEIERILSDLSLKVKINGDSCLSNLKVLVEFDFIFAKGRYASALNAIKPIVREDGAFSIFSGRHPLIENDKVVPSDIYLGEEFQTLMITGPNTGGKTVTIKTVGLLHIMGLSGLLIPARDNSSIAFFKEIFADIGDEQSIEQSLSTFSSHMTNIVNIMKHVDDKSLALFDELGAGTDPAEGAALAVSILETLRNRGAKLIATTHYSELKAYALKTDGVENASVEFDIETLRPTYRLLIGVPGKSNAFEISKRLGLVEGVIKRAKEYMSEENLQFENLIRELQEKSIIAKKEAREAKMLRDQAEDLKKKYEEKLEKLENTREKAYMDARREAKEIIANAKDEADDILKAMRELEKLGIAGGGRQRLEEERKKLKDSLEEREKGIHKMKENEGESITNVTLGMEAYLPSLNQKVIIVSMPDNRGEVQVEAGIMKVNVKLKDLRKTQVTKEEKVRRKREVKLNLSNVESRVDLRGLDAEEACYKADKYLDDAYMANLGEVTIVHGKGTGVLRKAINDMLKRHPHVKSYRLGAYGEGGDGVTMVELKG</sequence>
<reference key="1">
    <citation type="submission" date="2007-06" db="EMBL/GenBank/DDBJ databases">
        <title>Complete sequence of Clostridium beijerinckii NCIMB 8052.</title>
        <authorList>
            <consortium name="US DOE Joint Genome Institute"/>
            <person name="Copeland A."/>
            <person name="Lucas S."/>
            <person name="Lapidus A."/>
            <person name="Barry K."/>
            <person name="Detter J.C."/>
            <person name="Glavina del Rio T."/>
            <person name="Hammon N."/>
            <person name="Israni S."/>
            <person name="Dalin E."/>
            <person name="Tice H."/>
            <person name="Pitluck S."/>
            <person name="Sims D."/>
            <person name="Brettin T."/>
            <person name="Bruce D."/>
            <person name="Tapia R."/>
            <person name="Brainard J."/>
            <person name="Schmutz J."/>
            <person name="Larimer F."/>
            <person name="Land M."/>
            <person name="Hauser L."/>
            <person name="Kyrpides N."/>
            <person name="Mikhailova N."/>
            <person name="Bennet G."/>
            <person name="Cann I."/>
            <person name="Chen J.-S."/>
            <person name="Contreras A.L."/>
            <person name="Jones D."/>
            <person name="Kashket E."/>
            <person name="Mitchell W."/>
            <person name="Stoddard S."/>
            <person name="Schwarz W."/>
            <person name="Qureshi N."/>
            <person name="Young M."/>
            <person name="Shi Z."/>
            <person name="Ezeji T."/>
            <person name="White B."/>
            <person name="Blaschek H."/>
            <person name="Richardson P."/>
        </authorList>
    </citation>
    <scope>NUCLEOTIDE SEQUENCE [LARGE SCALE GENOMIC DNA]</scope>
    <source>
        <strain>ATCC 51743 / NCIMB 8052</strain>
    </source>
</reference>
<comment type="function">
    <text evidence="1">Endonuclease that is involved in the suppression of homologous recombination and thus may have a key role in the control of bacterial genetic diversity.</text>
</comment>
<comment type="function">
    <text evidence="1">Acts as a ribosome collision sensor, splitting the ribosome into its 2 subunits. Detects stalled/collided 70S ribosomes which it binds and splits by an ATP-hydrolysis driven conformational change. Acts upstream of the ribosome quality control system (RQC), a ribosome-associated complex that mediates the extraction of incompletely synthesized nascent chains from stalled ribosomes and their subsequent degradation. Probably generates substrates for RQC.</text>
</comment>
<comment type="subunit">
    <text evidence="1">Homodimer. Binds to stalled ribosomes, contacting rRNA.</text>
</comment>
<comment type="similarity">
    <text evidence="1">Belongs to the DNA mismatch repair MutS family. MutS2 subfamily.</text>
</comment>